<proteinExistence type="inferred from homology"/>
<evidence type="ECO:0000255" key="1">
    <source>
        <dbReference type="HAMAP-Rule" id="MF_00201"/>
    </source>
</evidence>
<gene>
    <name evidence="1" type="primary">recO</name>
    <name type="ordered locus">ECA3276</name>
</gene>
<dbReference type="EMBL" id="BX950851">
    <property type="protein sequence ID" value="CAG76174.1"/>
    <property type="molecule type" value="Genomic_DNA"/>
</dbReference>
<dbReference type="RefSeq" id="WP_011094794.1">
    <property type="nucleotide sequence ID" value="NC_004547.2"/>
</dbReference>
<dbReference type="SMR" id="Q6D221"/>
<dbReference type="STRING" id="218491.ECA3276"/>
<dbReference type="GeneID" id="57209959"/>
<dbReference type="KEGG" id="eca:ECA3276"/>
<dbReference type="PATRIC" id="fig|218491.5.peg.3322"/>
<dbReference type="eggNOG" id="COG1381">
    <property type="taxonomic scope" value="Bacteria"/>
</dbReference>
<dbReference type="HOGENOM" id="CLU_066645_1_0_6"/>
<dbReference type="OrthoDB" id="9804792at2"/>
<dbReference type="Proteomes" id="UP000007966">
    <property type="component" value="Chromosome"/>
</dbReference>
<dbReference type="GO" id="GO:0043590">
    <property type="term" value="C:bacterial nucleoid"/>
    <property type="evidence" value="ECO:0007669"/>
    <property type="project" value="TreeGrafter"/>
</dbReference>
<dbReference type="GO" id="GO:0006310">
    <property type="term" value="P:DNA recombination"/>
    <property type="evidence" value="ECO:0007669"/>
    <property type="project" value="UniProtKB-UniRule"/>
</dbReference>
<dbReference type="GO" id="GO:0006302">
    <property type="term" value="P:double-strand break repair"/>
    <property type="evidence" value="ECO:0007669"/>
    <property type="project" value="TreeGrafter"/>
</dbReference>
<dbReference type="Gene3D" id="2.40.50.140">
    <property type="entry name" value="Nucleic acid-binding proteins"/>
    <property type="match status" value="1"/>
</dbReference>
<dbReference type="Gene3D" id="1.20.1440.120">
    <property type="entry name" value="Recombination protein O, C-terminal domain"/>
    <property type="match status" value="1"/>
</dbReference>
<dbReference type="HAMAP" id="MF_00201">
    <property type="entry name" value="RecO"/>
    <property type="match status" value="1"/>
</dbReference>
<dbReference type="InterPro" id="IPR037278">
    <property type="entry name" value="ARFGAP/RecO"/>
</dbReference>
<dbReference type="InterPro" id="IPR022572">
    <property type="entry name" value="DNA_rep/recomb_RecO_N"/>
</dbReference>
<dbReference type="InterPro" id="IPR012340">
    <property type="entry name" value="NA-bd_OB-fold"/>
</dbReference>
<dbReference type="InterPro" id="IPR003717">
    <property type="entry name" value="RecO"/>
</dbReference>
<dbReference type="InterPro" id="IPR042242">
    <property type="entry name" value="RecO_C"/>
</dbReference>
<dbReference type="NCBIfam" id="TIGR00613">
    <property type="entry name" value="reco"/>
    <property type="match status" value="1"/>
</dbReference>
<dbReference type="PANTHER" id="PTHR33991">
    <property type="entry name" value="DNA REPAIR PROTEIN RECO"/>
    <property type="match status" value="1"/>
</dbReference>
<dbReference type="PANTHER" id="PTHR33991:SF1">
    <property type="entry name" value="DNA REPAIR PROTEIN RECO"/>
    <property type="match status" value="1"/>
</dbReference>
<dbReference type="Pfam" id="PF02565">
    <property type="entry name" value="RecO_C"/>
    <property type="match status" value="1"/>
</dbReference>
<dbReference type="Pfam" id="PF11967">
    <property type="entry name" value="RecO_N"/>
    <property type="match status" value="1"/>
</dbReference>
<dbReference type="SUPFAM" id="SSF57863">
    <property type="entry name" value="ArfGap/RecO-like zinc finger"/>
    <property type="match status" value="1"/>
</dbReference>
<dbReference type="SUPFAM" id="SSF50249">
    <property type="entry name" value="Nucleic acid-binding proteins"/>
    <property type="match status" value="1"/>
</dbReference>
<organism>
    <name type="scientific">Pectobacterium atrosepticum (strain SCRI 1043 / ATCC BAA-672)</name>
    <name type="common">Erwinia carotovora subsp. atroseptica</name>
    <dbReference type="NCBI Taxonomy" id="218491"/>
    <lineage>
        <taxon>Bacteria</taxon>
        <taxon>Pseudomonadati</taxon>
        <taxon>Pseudomonadota</taxon>
        <taxon>Gammaproteobacteria</taxon>
        <taxon>Enterobacterales</taxon>
        <taxon>Pectobacteriaceae</taxon>
        <taxon>Pectobacterium</taxon>
    </lineage>
</organism>
<reference key="1">
    <citation type="journal article" date="2004" name="Proc. Natl. Acad. Sci. U.S.A.">
        <title>Genome sequence of the enterobacterial phytopathogen Erwinia carotovora subsp. atroseptica and characterization of virulence factors.</title>
        <authorList>
            <person name="Bell K.S."/>
            <person name="Sebaihia M."/>
            <person name="Pritchard L."/>
            <person name="Holden M.T.G."/>
            <person name="Hyman L.J."/>
            <person name="Holeva M.C."/>
            <person name="Thomson N.R."/>
            <person name="Bentley S.D."/>
            <person name="Churcher L.J.C."/>
            <person name="Mungall K."/>
            <person name="Atkin R."/>
            <person name="Bason N."/>
            <person name="Brooks K."/>
            <person name="Chillingworth T."/>
            <person name="Clark K."/>
            <person name="Doggett J."/>
            <person name="Fraser A."/>
            <person name="Hance Z."/>
            <person name="Hauser H."/>
            <person name="Jagels K."/>
            <person name="Moule S."/>
            <person name="Norbertczak H."/>
            <person name="Ormond D."/>
            <person name="Price C."/>
            <person name="Quail M.A."/>
            <person name="Sanders M."/>
            <person name="Walker D."/>
            <person name="Whitehead S."/>
            <person name="Salmond G.P.C."/>
            <person name="Birch P.R.J."/>
            <person name="Parkhill J."/>
            <person name="Toth I.K."/>
        </authorList>
    </citation>
    <scope>NUCLEOTIDE SEQUENCE [LARGE SCALE GENOMIC DNA]</scope>
    <source>
        <strain>SCRI 1043 / ATCC BAA-672</strain>
    </source>
</reference>
<sequence length="245" mass="27299">MEGWQRAFVLHGRPYSETSLLLDLFSESDGRVRVLAKGARARRSSLKGCLQPFTPLLVRWSGRGEVKTLRSAEPVSLALPLTGSMLYSGLYVNELLARVLEHETNYSALFFDYLHCLQHLAAQDASPEPALRRFELALLGYLGYGVDFLHCAGSGEPVADTMTYQYREERGFTASLVVDNKSFTGHELHSLASREFPDVGTLKAAKRFTRIALKPYLGGKPLKSRELFRQFVPAANLSKPTSSDK</sequence>
<protein>
    <recommendedName>
        <fullName evidence="1">DNA repair protein RecO</fullName>
    </recommendedName>
    <alternativeName>
        <fullName evidence="1">Recombination protein O</fullName>
    </alternativeName>
</protein>
<keyword id="KW-0227">DNA damage</keyword>
<keyword id="KW-0233">DNA recombination</keyword>
<keyword id="KW-0234">DNA repair</keyword>
<keyword id="KW-1185">Reference proteome</keyword>
<name>RECO_PECAS</name>
<accession>Q6D221</accession>
<feature type="chain" id="PRO_0000204953" description="DNA repair protein RecO">
    <location>
        <begin position="1"/>
        <end position="245"/>
    </location>
</feature>
<comment type="function">
    <text evidence="1">Involved in DNA repair and RecF pathway recombination.</text>
</comment>
<comment type="similarity">
    <text evidence="1">Belongs to the RecO family.</text>
</comment>